<name>RS8_BRUA1</name>
<proteinExistence type="inferred from homology"/>
<evidence type="ECO:0000255" key="1">
    <source>
        <dbReference type="HAMAP-Rule" id="MF_01302"/>
    </source>
</evidence>
<evidence type="ECO:0000305" key="2"/>
<sequence>MSVSDPLGDMLTRIRNAVGRKKTKVSTPASKLRARVLDVLQAEGYIRAYTQSEFENGKAEIEIELKYYEGVPVIREITRVSKPGRRVYVSVKSIPQVANGLGISILSTPKGVMADHEAREQNVGGELLCRIF</sequence>
<organism>
    <name type="scientific">Brucella abortus (strain S19)</name>
    <dbReference type="NCBI Taxonomy" id="430066"/>
    <lineage>
        <taxon>Bacteria</taxon>
        <taxon>Pseudomonadati</taxon>
        <taxon>Pseudomonadota</taxon>
        <taxon>Alphaproteobacteria</taxon>
        <taxon>Hyphomicrobiales</taxon>
        <taxon>Brucellaceae</taxon>
        <taxon>Brucella/Ochrobactrum group</taxon>
        <taxon>Brucella</taxon>
    </lineage>
</organism>
<feature type="chain" id="PRO_1000140520" description="Small ribosomal subunit protein uS8">
    <location>
        <begin position="1"/>
        <end position="132"/>
    </location>
</feature>
<comment type="function">
    <text evidence="1">One of the primary rRNA binding proteins, it binds directly to 16S rRNA central domain where it helps coordinate assembly of the platform of the 30S subunit.</text>
</comment>
<comment type="subunit">
    <text evidence="1">Part of the 30S ribosomal subunit. Contacts proteins S5 and S12.</text>
</comment>
<comment type="similarity">
    <text evidence="1">Belongs to the universal ribosomal protein uS8 family.</text>
</comment>
<accession>B2S665</accession>
<dbReference type="EMBL" id="CP000887">
    <property type="protein sequence ID" value="ACD72662.1"/>
    <property type="molecule type" value="Genomic_DNA"/>
</dbReference>
<dbReference type="RefSeq" id="WP_002964348.1">
    <property type="nucleotide sequence ID" value="NC_010742.1"/>
</dbReference>
<dbReference type="SMR" id="B2S665"/>
<dbReference type="GeneID" id="93016453"/>
<dbReference type="KEGG" id="bmc:BAbS19_I11570"/>
<dbReference type="HOGENOM" id="CLU_098428_0_0_5"/>
<dbReference type="Proteomes" id="UP000002565">
    <property type="component" value="Chromosome 1"/>
</dbReference>
<dbReference type="GO" id="GO:1990904">
    <property type="term" value="C:ribonucleoprotein complex"/>
    <property type="evidence" value="ECO:0007669"/>
    <property type="project" value="UniProtKB-KW"/>
</dbReference>
<dbReference type="GO" id="GO:0005840">
    <property type="term" value="C:ribosome"/>
    <property type="evidence" value="ECO:0007669"/>
    <property type="project" value="UniProtKB-KW"/>
</dbReference>
<dbReference type="GO" id="GO:0019843">
    <property type="term" value="F:rRNA binding"/>
    <property type="evidence" value="ECO:0007669"/>
    <property type="project" value="UniProtKB-UniRule"/>
</dbReference>
<dbReference type="GO" id="GO:0003735">
    <property type="term" value="F:structural constituent of ribosome"/>
    <property type="evidence" value="ECO:0007669"/>
    <property type="project" value="InterPro"/>
</dbReference>
<dbReference type="GO" id="GO:0006412">
    <property type="term" value="P:translation"/>
    <property type="evidence" value="ECO:0007669"/>
    <property type="project" value="UniProtKB-UniRule"/>
</dbReference>
<dbReference type="FunFam" id="3.30.1490.10:FF:000001">
    <property type="entry name" value="30S ribosomal protein S8"/>
    <property type="match status" value="1"/>
</dbReference>
<dbReference type="Gene3D" id="3.30.1370.30">
    <property type="match status" value="1"/>
</dbReference>
<dbReference type="Gene3D" id="3.30.1490.10">
    <property type="match status" value="1"/>
</dbReference>
<dbReference type="HAMAP" id="MF_01302_B">
    <property type="entry name" value="Ribosomal_uS8_B"/>
    <property type="match status" value="1"/>
</dbReference>
<dbReference type="InterPro" id="IPR000630">
    <property type="entry name" value="Ribosomal_uS8"/>
</dbReference>
<dbReference type="InterPro" id="IPR047863">
    <property type="entry name" value="Ribosomal_uS8_CS"/>
</dbReference>
<dbReference type="InterPro" id="IPR035987">
    <property type="entry name" value="Ribosomal_uS8_sf"/>
</dbReference>
<dbReference type="NCBIfam" id="NF001109">
    <property type="entry name" value="PRK00136.1"/>
    <property type="match status" value="1"/>
</dbReference>
<dbReference type="PANTHER" id="PTHR11758">
    <property type="entry name" value="40S RIBOSOMAL PROTEIN S15A"/>
    <property type="match status" value="1"/>
</dbReference>
<dbReference type="Pfam" id="PF00410">
    <property type="entry name" value="Ribosomal_S8"/>
    <property type="match status" value="1"/>
</dbReference>
<dbReference type="SUPFAM" id="SSF56047">
    <property type="entry name" value="Ribosomal protein S8"/>
    <property type="match status" value="1"/>
</dbReference>
<dbReference type="PROSITE" id="PS00053">
    <property type="entry name" value="RIBOSOMAL_S8"/>
    <property type="match status" value="1"/>
</dbReference>
<reference key="1">
    <citation type="journal article" date="2008" name="PLoS ONE">
        <title>Genome sequence of Brucella abortus vaccine strain S19 compared to virulent strains yields candidate virulence genes.</title>
        <authorList>
            <person name="Crasta O.R."/>
            <person name="Folkerts O."/>
            <person name="Fei Z."/>
            <person name="Mane S.P."/>
            <person name="Evans C."/>
            <person name="Martino-Catt S."/>
            <person name="Bricker B."/>
            <person name="Yu G."/>
            <person name="Du L."/>
            <person name="Sobral B.W."/>
        </authorList>
    </citation>
    <scope>NUCLEOTIDE SEQUENCE [LARGE SCALE GENOMIC DNA]</scope>
    <source>
        <strain>S19</strain>
    </source>
</reference>
<protein>
    <recommendedName>
        <fullName evidence="1">Small ribosomal subunit protein uS8</fullName>
    </recommendedName>
    <alternativeName>
        <fullName evidence="2">30S ribosomal protein S8</fullName>
    </alternativeName>
</protein>
<gene>
    <name evidence="1" type="primary">rpsH</name>
    <name type="ordered locus">BAbS19_I11570</name>
</gene>
<keyword id="KW-0687">Ribonucleoprotein</keyword>
<keyword id="KW-0689">Ribosomal protein</keyword>
<keyword id="KW-0694">RNA-binding</keyword>
<keyword id="KW-0699">rRNA-binding</keyword>